<gene>
    <name type="primary">CRYAA</name>
</gene>
<proteinExistence type="evidence at protein level"/>
<comment type="function">
    <text evidence="4">Contributes to the transparency and refractive index of the lens. Acts as a chaperone, preventing aggregation of various proteins under a wide range of stress conditions. Required for the correct formation of lens intermediate filaments as part of a complex composed of BFSP1, BFSP2 and CRYAA.</text>
</comment>
<comment type="subunit">
    <text evidence="2 4">Heteromer composed of three CRYAA and one CRYAB subunits. Inter-subunit bridging via zinc ions enhances stability, which is crucial as there is no protein turn over in the lens. Can also form homodimers and homotetramers (dimers of dimers) which serve as the building blocks of homooligomers (By similarity). Within homooligomers, the zinc-binding motif is created from residues of 3 different molecules. His-100 and Glu-102 from one molecule are ligands of the zinc ion, and His-107 and His-154 residues from additional molecules complete the site with tetrahedral coordination geometry (By similarity). Part of a complex required for lens intermediate filament formation composed of BFSP1, BFSP2 and CRYAA (By similarity).</text>
</comment>
<comment type="subcellular location">
    <subcellularLocation>
        <location evidence="4">Cytoplasm</location>
    </subcellularLocation>
    <subcellularLocation>
        <location evidence="4">Nucleus</location>
    </subcellularLocation>
    <text evidence="4">Translocates to the nucleus during heat shock and resides in sub-nuclear structures known as SC35 speckles or nuclear splicing speckles.</text>
</comment>
<comment type="PTM">
    <text evidence="4">Acetylation at Lys-70 may increase chaperone activity.</text>
</comment>
<comment type="PTM">
    <text evidence="4">Undergoes age-dependent proteolytical cleavage at the C-terminus.</text>
</comment>
<comment type="similarity">
    <text evidence="5">Belongs to the small heat shock protein (HSP20) family.</text>
</comment>
<reference key="1">
    <citation type="book" date="1993" name="Mammal phylogeny: placentals">
        <title>Eye lens crystallins and the phylogeny of placental orders: evidence for a macroscelid-paenungulate clade?</title>
        <editorList>
            <person name="Szalay F.S."/>
            <person name="Novacek M.J."/>
            <person name="McKenna M.C."/>
        </editorList>
        <authorList>
            <person name="de Jong W.W."/>
            <person name="Leunissen J.A.M."/>
            <person name="Wistow G.J."/>
        </authorList>
    </citation>
    <scope>PROTEIN SEQUENCE</scope>
</reference>
<dbReference type="SMR" id="P82531"/>
<dbReference type="GlyCosmos" id="P82531">
    <property type="glycosylation" value="1 site, No reported glycans"/>
</dbReference>
<dbReference type="GO" id="GO:0005737">
    <property type="term" value="C:cytoplasm"/>
    <property type="evidence" value="ECO:0000250"/>
    <property type="project" value="UniProtKB"/>
</dbReference>
<dbReference type="GO" id="GO:0005634">
    <property type="term" value="C:nucleus"/>
    <property type="evidence" value="ECO:0000250"/>
    <property type="project" value="UniProtKB"/>
</dbReference>
<dbReference type="GO" id="GO:0046872">
    <property type="term" value="F:metal ion binding"/>
    <property type="evidence" value="ECO:0007669"/>
    <property type="project" value="UniProtKB-KW"/>
</dbReference>
<dbReference type="GO" id="GO:0005212">
    <property type="term" value="F:structural constituent of eye lens"/>
    <property type="evidence" value="ECO:0007669"/>
    <property type="project" value="UniProtKB-KW"/>
</dbReference>
<dbReference type="GO" id="GO:0051082">
    <property type="term" value="F:unfolded protein binding"/>
    <property type="evidence" value="ECO:0007669"/>
    <property type="project" value="TreeGrafter"/>
</dbReference>
<dbReference type="GO" id="GO:0002088">
    <property type="term" value="P:lens development in camera-type eye"/>
    <property type="evidence" value="ECO:0007669"/>
    <property type="project" value="TreeGrafter"/>
</dbReference>
<dbReference type="GO" id="GO:0043066">
    <property type="term" value="P:negative regulation of apoptotic process"/>
    <property type="evidence" value="ECO:0007669"/>
    <property type="project" value="TreeGrafter"/>
</dbReference>
<dbReference type="GO" id="GO:0042026">
    <property type="term" value="P:protein refolding"/>
    <property type="evidence" value="ECO:0007669"/>
    <property type="project" value="TreeGrafter"/>
</dbReference>
<dbReference type="GO" id="GO:0009408">
    <property type="term" value="P:response to heat"/>
    <property type="evidence" value="ECO:0007669"/>
    <property type="project" value="TreeGrafter"/>
</dbReference>
<dbReference type="FunFam" id="2.60.40.790:FF:000008">
    <property type="entry name" value="Alpha-crystallin A chain"/>
    <property type="match status" value="1"/>
</dbReference>
<dbReference type="Gene3D" id="2.60.40.790">
    <property type="match status" value="1"/>
</dbReference>
<dbReference type="InterPro" id="IPR002068">
    <property type="entry name" value="A-crystallin/Hsp20_dom"/>
</dbReference>
<dbReference type="InterPro" id="IPR055269">
    <property type="entry name" value="Alpha-crystallin/HSP_16"/>
</dbReference>
<dbReference type="InterPro" id="IPR001436">
    <property type="entry name" value="Alpha-crystallin/sHSP_animal"/>
</dbReference>
<dbReference type="InterPro" id="IPR003090">
    <property type="entry name" value="Alpha-crystallin_N"/>
</dbReference>
<dbReference type="InterPro" id="IPR008978">
    <property type="entry name" value="HSP20-like_chaperone"/>
</dbReference>
<dbReference type="PANTHER" id="PTHR45640:SF14">
    <property type="entry name" value="ALPHA-CRYSTALLIN A CHAIN"/>
    <property type="match status" value="1"/>
</dbReference>
<dbReference type="PANTHER" id="PTHR45640">
    <property type="entry name" value="HEAT SHOCK PROTEIN HSP-12.2-RELATED"/>
    <property type="match status" value="1"/>
</dbReference>
<dbReference type="Pfam" id="PF00525">
    <property type="entry name" value="Crystallin"/>
    <property type="match status" value="1"/>
</dbReference>
<dbReference type="Pfam" id="PF00011">
    <property type="entry name" value="HSP20"/>
    <property type="match status" value="1"/>
</dbReference>
<dbReference type="PIRSF" id="PIRSF036514">
    <property type="entry name" value="Sm_HSP_B1"/>
    <property type="match status" value="1"/>
</dbReference>
<dbReference type="PRINTS" id="PR00299">
    <property type="entry name" value="ACRYSTALLIN"/>
</dbReference>
<dbReference type="SUPFAM" id="SSF49764">
    <property type="entry name" value="HSP20-like chaperones"/>
    <property type="match status" value="1"/>
</dbReference>
<dbReference type="PROSITE" id="PS01031">
    <property type="entry name" value="SHSP"/>
    <property type="match status" value="1"/>
</dbReference>
<name>CRYAA_PTEPO</name>
<keyword id="KW-0007">Acetylation</keyword>
<keyword id="KW-0143">Chaperone</keyword>
<keyword id="KW-0963">Cytoplasm</keyword>
<keyword id="KW-0903">Direct protein sequencing</keyword>
<keyword id="KW-0273">Eye lens protein</keyword>
<keyword id="KW-0325">Glycoprotein</keyword>
<keyword id="KW-0479">Metal-binding</keyword>
<keyword id="KW-0488">Methylation</keyword>
<keyword id="KW-0539">Nucleus</keyword>
<keyword id="KW-0597">Phosphoprotein</keyword>
<keyword id="KW-0862">Zinc</keyword>
<accession>P82531</accession>
<protein>
    <recommendedName>
        <fullName>Alpha-crystallin A chain</fullName>
    </recommendedName>
</protein>
<organism>
    <name type="scientific">Pteropus poliocephalus</name>
    <name type="common">Grey-headed flying fox</name>
    <dbReference type="NCBI Taxonomy" id="9403"/>
    <lineage>
        <taxon>Eukaryota</taxon>
        <taxon>Metazoa</taxon>
        <taxon>Chordata</taxon>
        <taxon>Craniata</taxon>
        <taxon>Vertebrata</taxon>
        <taxon>Euteleostomi</taxon>
        <taxon>Mammalia</taxon>
        <taxon>Eutheria</taxon>
        <taxon>Laurasiatheria</taxon>
        <taxon>Chiroptera</taxon>
        <taxon>Yinpterochiroptera</taxon>
        <taxon>Pteropodoidea</taxon>
        <taxon>Pteropodidae</taxon>
        <taxon>Pteropodinae</taxon>
        <taxon>Pteropus</taxon>
    </lineage>
</organism>
<sequence length="173" mass="19746">MDIAIQHPWFKRALGPFYPSRLFDQFFGEGLFEYDLLPFLSSTISPYYRQSLFRTVLDSGISEVRSDRDKFVIFLDVKHFSPEDLTVKVQEDFVEIHGKHNERQDDHGYISREFHRRYRLPSNVDQSALSCSLSADGMLTFSGPKVPSGVDAGHSERAIPVSREEKPSSAPSS</sequence>
<evidence type="ECO:0000250" key="1"/>
<evidence type="ECO:0000250" key="2">
    <source>
        <dbReference type="UniProtKB" id="P02470"/>
    </source>
</evidence>
<evidence type="ECO:0000250" key="3">
    <source>
        <dbReference type="UniProtKB" id="P02474"/>
    </source>
</evidence>
<evidence type="ECO:0000250" key="4">
    <source>
        <dbReference type="UniProtKB" id="P02489"/>
    </source>
</evidence>
<evidence type="ECO:0000255" key="5">
    <source>
        <dbReference type="PROSITE-ProRule" id="PRU00285"/>
    </source>
</evidence>
<evidence type="ECO:0000256" key="6">
    <source>
        <dbReference type="SAM" id="MobiDB-lite"/>
    </source>
</evidence>
<evidence type="ECO:0000305" key="7"/>
<feature type="chain" id="PRO_0000125881" description="Alpha-crystallin A chain">
    <location>
        <begin position="1"/>
        <end position="173"/>
    </location>
</feature>
<feature type="domain" description="sHSP" evidence="5">
    <location>
        <begin position="52"/>
        <end position="162"/>
    </location>
</feature>
<feature type="region of interest" description="Required for complex formation with BFSP1 and BFSP2" evidence="4">
    <location>
        <begin position="1"/>
        <end position="63"/>
    </location>
</feature>
<feature type="region of interest" description="Disordered" evidence="6">
    <location>
        <begin position="144"/>
        <end position="173"/>
    </location>
</feature>
<feature type="compositionally biased region" description="Basic and acidic residues" evidence="6">
    <location>
        <begin position="153"/>
        <end position="167"/>
    </location>
</feature>
<feature type="binding site" evidence="2">
    <location>
        <position position="100"/>
    </location>
    <ligand>
        <name>Zn(2+)</name>
        <dbReference type="ChEBI" id="CHEBI:29105"/>
        <label>1</label>
    </ligand>
</feature>
<feature type="binding site" evidence="2">
    <location>
        <position position="102"/>
    </location>
    <ligand>
        <name>Zn(2+)</name>
        <dbReference type="ChEBI" id="CHEBI:29105"/>
        <label>1</label>
    </ligand>
</feature>
<feature type="binding site" evidence="2">
    <location>
        <position position="107"/>
    </location>
    <ligand>
        <name>Zn(2+)</name>
        <dbReference type="ChEBI" id="CHEBI:29105"/>
        <label>2</label>
    </ligand>
</feature>
<feature type="binding site" evidence="2">
    <location>
        <position position="154"/>
    </location>
    <ligand>
        <name>Zn(2+)</name>
        <dbReference type="ChEBI" id="CHEBI:29105"/>
        <label>3</label>
    </ligand>
</feature>
<feature type="modified residue" description="N-acetylmethionine" evidence="3 7">
    <location>
        <position position="1"/>
    </location>
</feature>
<feature type="modified residue" description="Deamidated glutamine; partial" evidence="1">
    <location>
        <position position="6"/>
    </location>
</feature>
<feature type="modified residue" description="Phosphoserine" evidence="4">
    <location>
        <position position="45"/>
    </location>
</feature>
<feature type="modified residue" description="Deamidated glutamine; partial" evidence="1">
    <location>
        <position position="50"/>
    </location>
</feature>
<feature type="modified residue" description="N6-acetyllysine" evidence="4">
    <location>
        <position position="70"/>
    </location>
</feature>
<feature type="modified residue" description="Deamidated glutamine; partial" evidence="1">
    <location>
        <position position="90"/>
    </location>
</feature>
<feature type="modified residue" description="N6-acetyllysine" evidence="4">
    <location>
        <position position="99"/>
    </location>
</feature>
<feature type="modified residue" description="Deamidated asparagine; partial" evidence="1">
    <location>
        <position position="101"/>
    </location>
</feature>
<feature type="modified residue" description="Phosphoserine" evidence="2">
    <location>
        <position position="122"/>
    </location>
</feature>
<feature type="modified residue" description="Deamidated asparagine; partial" evidence="1">
    <location>
        <position position="123"/>
    </location>
</feature>
<feature type="glycosylation site" description="O-linked (GlcNAc) serine" evidence="1">
    <location>
        <position position="162"/>
    </location>
</feature>